<name>RL14_POLSJ</name>
<proteinExistence type="inferred from homology"/>
<keyword id="KW-1185">Reference proteome</keyword>
<keyword id="KW-0687">Ribonucleoprotein</keyword>
<keyword id="KW-0689">Ribosomal protein</keyword>
<keyword id="KW-0694">RNA-binding</keyword>
<keyword id="KW-0699">rRNA-binding</keyword>
<reference key="1">
    <citation type="journal article" date="2008" name="Appl. Environ. Microbiol.">
        <title>The genome of Polaromonas sp. strain JS666: insights into the evolution of a hydrocarbon- and xenobiotic-degrading bacterium, and features of relevance to biotechnology.</title>
        <authorList>
            <person name="Mattes T.E."/>
            <person name="Alexander A.K."/>
            <person name="Richardson P.M."/>
            <person name="Munk A.C."/>
            <person name="Han C.S."/>
            <person name="Stothard P."/>
            <person name="Coleman N.V."/>
        </authorList>
    </citation>
    <scope>NUCLEOTIDE SEQUENCE [LARGE SCALE GENOMIC DNA]</scope>
    <source>
        <strain>JS666 / ATCC BAA-500</strain>
    </source>
</reference>
<gene>
    <name evidence="1" type="primary">rplN</name>
    <name type="ordered locus">Bpro_0485</name>
</gene>
<protein>
    <recommendedName>
        <fullName evidence="1">Large ribosomal subunit protein uL14</fullName>
    </recommendedName>
    <alternativeName>
        <fullName evidence="2">50S ribosomal protein L14</fullName>
    </alternativeName>
</protein>
<evidence type="ECO:0000255" key="1">
    <source>
        <dbReference type="HAMAP-Rule" id="MF_01367"/>
    </source>
</evidence>
<evidence type="ECO:0000305" key="2"/>
<feature type="chain" id="PRO_0000266520" description="Large ribosomal subunit protein uL14">
    <location>
        <begin position="1"/>
        <end position="122"/>
    </location>
</feature>
<comment type="function">
    <text evidence="1">Binds to 23S rRNA. Forms part of two intersubunit bridges in the 70S ribosome.</text>
</comment>
<comment type="subunit">
    <text evidence="1">Part of the 50S ribosomal subunit. Forms a cluster with proteins L3 and L19. In the 70S ribosome, L14 and L19 interact and together make contacts with the 16S rRNA in bridges B5 and B8.</text>
</comment>
<comment type="similarity">
    <text evidence="1">Belongs to the universal ribosomal protein uL14 family.</text>
</comment>
<sequence>MIQTQSKLDVADNTGAKSVMCIKVLGGSKRRYASVGDVIKVSIKEAAPRGRVKKGEVYSAVVVRTAKGIRRGDGSLVKFDGNAAVLLNAKLEPIGTRIFGPVTRELRTEKFMKIVSLAPEVL</sequence>
<dbReference type="EMBL" id="CP000316">
    <property type="protein sequence ID" value="ABE42449.1"/>
    <property type="molecule type" value="Genomic_DNA"/>
</dbReference>
<dbReference type="RefSeq" id="WP_007869247.1">
    <property type="nucleotide sequence ID" value="NZ_FNHX01000009.1"/>
</dbReference>
<dbReference type="SMR" id="Q12G93"/>
<dbReference type="STRING" id="296591.Bpro_0485"/>
<dbReference type="KEGG" id="pol:Bpro_0485"/>
<dbReference type="eggNOG" id="COG0093">
    <property type="taxonomic scope" value="Bacteria"/>
</dbReference>
<dbReference type="HOGENOM" id="CLU_095071_2_1_4"/>
<dbReference type="OrthoDB" id="9806379at2"/>
<dbReference type="Proteomes" id="UP000001983">
    <property type="component" value="Chromosome"/>
</dbReference>
<dbReference type="GO" id="GO:0022625">
    <property type="term" value="C:cytosolic large ribosomal subunit"/>
    <property type="evidence" value="ECO:0007669"/>
    <property type="project" value="TreeGrafter"/>
</dbReference>
<dbReference type="GO" id="GO:0070180">
    <property type="term" value="F:large ribosomal subunit rRNA binding"/>
    <property type="evidence" value="ECO:0007669"/>
    <property type="project" value="TreeGrafter"/>
</dbReference>
<dbReference type="GO" id="GO:0003735">
    <property type="term" value="F:structural constituent of ribosome"/>
    <property type="evidence" value="ECO:0007669"/>
    <property type="project" value="InterPro"/>
</dbReference>
<dbReference type="GO" id="GO:0006412">
    <property type="term" value="P:translation"/>
    <property type="evidence" value="ECO:0007669"/>
    <property type="project" value="UniProtKB-UniRule"/>
</dbReference>
<dbReference type="CDD" id="cd00337">
    <property type="entry name" value="Ribosomal_uL14"/>
    <property type="match status" value="1"/>
</dbReference>
<dbReference type="FunFam" id="2.40.150.20:FF:000001">
    <property type="entry name" value="50S ribosomal protein L14"/>
    <property type="match status" value="1"/>
</dbReference>
<dbReference type="Gene3D" id="2.40.150.20">
    <property type="entry name" value="Ribosomal protein L14"/>
    <property type="match status" value="1"/>
</dbReference>
<dbReference type="HAMAP" id="MF_01367">
    <property type="entry name" value="Ribosomal_uL14"/>
    <property type="match status" value="1"/>
</dbReference>
<dbReference type="InterPro" id="IPR000218">
    <property type="entry name" value="Ribosomal_uL14"/>
</dbReference>
<dbReference type="InterPro" id="IPR005745">
    <property type="entry name" value="Ribosomal_uL14_bac-type"/>
</dbReference>
<dbReference type="InterPro" id="IPR019972">
    <property type="entry name" value="Ribosomal_uL14_CS"/>
</dbReference>
<dbReference type="InterPro" id="IPR036853">
    <property type="entry name" value="Ribosomal_uL14_sf"/>
</dbReference>
<dbReference type="NCBIfam" id="TIGR01067">
    <property type="entry name" value="rplN_bact"/>
    <property type="match status" value="1"/>
</dbReference>
<dbReference type="PANTHER" id="PTHR11761">
    <property type="entry name" value="50S/60S RIBOSOMAL PROTEIN L14/L23"/>
    <property type="match status" value="1"/>
</dbReference>
<dbReference type="PANTHER" id="PTHR11761:SF3">
    <property type="entry name" value="LARGE RIBOSOMAL SUBUNIT PROTEIN UL14M"/>
    <property type="match status" value="1"/>
</dbReference>
<dbReference type="Pfam" id="PF00238">
    <property type="entry name" value="Ribosomal_L14"/>
    <property type="match status" value="1"/>
</dbReference>
<dbReference type="SMART" id="SM01374">
    <property type="entry name" value="Ribosomal_L14"/>
    <property type="match status" value="1"/>
</dbReference>
<dbReference type="SUPFAM" id="SSF50193">
    <property type="entry name" value="Ribosomal protein L14"/>
    <property type="match status" value="1"/>
</dbReference>
<dbReference type="PROSITE" id="PS00049">
    <property type="entry name" value="RIBOSOMAL_L14"/>
    <property type="match status" value="1"/>
</dbReference>
<accession>Q12G93</accession>
<organism>
    <name type="scientific">Polaromonas sp. (strain JS666 / ATCC BAA-500)</name>
    <dbReference type="NCBI Taxonomy" id="296591"/>
    <lineage>
        <taxon>Bacteria</taxon>
        <taxon>Pseudomonadati</taxon>
        <taxon>Pseudomonadota</taxon>
        <taxon>Betaproteobacteria</taxon>
        <taxon>Burkholderiales</taxon>
        <taxon>Comamonadaceae</taxon>
        <taxon>Polaromonas</taxon>
    </lineage>
</organism>